<evidence type="ECO:0000255" key="1">
    <source>
        <dbReference type="HAMAP-Rule" id="MF_00059"/>
    </source>
</evidence>
<accession>Q32RM8</accession>
<keyword id="KW-0150">Chloroplast</keyword>
<keyword id="KW-0240">DNA-directed RNA polymerase</keyword>
<keyword id="KW-0548">Nucleotidyltransferase</keyword>
<keyword id="KW-0934">Plastid</keyword>
<keyword id="KW-0804">Transcription</keyword>
<keyword id="KW-0808">Transferase</keyword>
<geneLocation type="chloroplast"/>
<proteinExistence type="inferred from homology"/>
<protein>
    <recommendedName>
        <fullName evidence="1">DNA-directed RNA polymerase subunit alpha</fullName>
        <shortName evidence="1">PEP</shortName>
        <ecNumber evidence="1">2.7.7.6</ecNumber>
    </recommendedName>
    <alternativeName>
        <fullName evidence="1">Plastid-encoded RNA polymerase subunit alpha</fullName>
        <shortName evidence="1">RNA polymerase subunit alpha</shortName>
    </alternativeName>
</protein>
<dbReference type="EC" id="2.7.7.6" evidence="1"/>
<dbReference type="EMBL" id="AY958086">
    <property type="protein sequence ID" value="AAX45861.1"/>
    <property type="molecule type" value="Genomic_DNA"/>
</dbReference>
<dbReference type="RefSeq" id="YP_636498.1">
    <property type="nucleotide sequence ID" value="NC_008117.1"/>
</dbReference>
<dbReference type="SMR" id="Q32RM8"/>
<dbReference type="GeneID" id="4108181"/>
<dbReference type="GO" id="GO:0009507">
    <property type="term" value="C:chloroplast"/>
    <property type="evidence" value="ECO:0007669"/>
    <property type="project" value="UniProtKB-SubCell"/>
</dbReference>
<dbReference type="GO" id="GO:0000428">
    <property type="term" value="C:DNA-directed RNA polymerase complex"/>
    <property type="evidence" value="ECO:0007669"/>
    <property type="project" value="UniProtKB-KW"/>
</dbReference>
<dbReference type="GO" id="GO:0005739">
    <property type="term" value="C:mitochondrion"/>
    <property type="evidence" value="ECO:0007669"/>
    <property type="project" value="GOC"/>
</dbReference>
<dbReference type="GO" id="GO:0003677">
    <property type="term" value="F:DNA binding"/>
    <property type="evidence" value="ECO:0007669"/>
    <property type="project" value="UniProtKB-UniRule"/>
</dbReference>
<dbReference type="GO" id="GO:0003899">
    <property type="term" value="F:DNA-directed RNA polymerase activity"/>
    <property type="evidence" value="ECO:0007669"/>
    <property type="project" value="UniProtKB-UniRule"/>
</dbReference>
<dbReference type="GO" id="GO:0046983">
    <property type="term" value="F:protein dimerization activity"/>
    <property type="evidence" value="ECO:0007669"/>
    <property type="project" value="InterPro"/>
</dbReference>
<dbReference type="GO" id="GO:0006351">
    <property type="term" value="P:DNA-templated transcription"/>
    <property type="evidence" value="ECO:0007669"/>
    <property type="project" value="UniProtKB-UniRule"/>
</dbReference>
<dbReference type="CDD" id="cd06928">
    <property type="entry name" value="RNAP_alpha_NTD"/>
    <property type="match status" value="1"/>
</dbReference>
<dbReference type="Gene3D" id="1.10.150.20">
    <property type="entry name" value="5' to 3' exonuclease, C-terminal subdomain"/>
    <property type="match status" value="1"/>
</dbReference>
<dbReference type="Gene3D" id="2.170.120.12">
    <property type="entry name" value="DNA-directed RNA polymerase, insert domain"/>
    <property type="match status" value="1"/>
</dbReference>
<dbReference type="Gene3D" id="3.30.1360.10">
    <property type="entry name" value="RNA polymerase, RBP11-like subunit"/>
    <property type="match status" value="1"/>
</dbReference>
<dbReference type="HAMAP" id="MF_00059">
    <property type="entry name" value="RNApol_bact_RpoA"/>
    <property type="match status" value="1"/>
</dbReference>
<dbReference type="InterPro" id="IPR011262">
    <property type="entry name" value="DNA-dir_RNA_pol_insert"/>
</dbReference>
<dbReference type="InterPro" id="IPR011263">
    <property type="entry name" value="DNA-dir_RNA_pol_RpoA/D/Rpb3"/>
</dbReference>
<dbReference type="InterPro" id="IPR011773">
    <property type="entry name" value="DNA-dir_RpoA"/>
</dbReference>
<dbReference type="InterPro" id="IPR036603">
    <property type="entry name" value="RBP11-like"/>
</dbReference>
<dbReference type="InterPro" id="IPR011260">
    <property type="entry name" value="RNAP_asu_C"/>
</dbReference>
<dbReference type="InterPro" id="IPR036643">
    <property type="entry name" value="RNApol_insert_sf"/>
</dbReference>
<dbReference type="Pfam" id="PF01000">
    <property type="entry name" value="RNA_pol_A_bac"/>
    <property type="match status" value="1"/>
</dbReference>
<dbReference type="Pfam" id="PF03118">
    <property type="entry name" value="RNA_pol_A_CTD"/>
    <property type="match status" value="1"/>
</dbReference>
<dbReference type="Pfam" id="PF01193">
    <property type="entry name" value="RNA_pol_L"/>
    <property type="match status" value="1"/>
</dbReference>
<dbReference type="SMART" id="SM00662">
    <property type="entry name" value="RPOLD"/>
    <property type="match status" value="1"/>
</dbReference>
<dbReference type="SUPFAM" id="SSF47789">
    <property type="entry name" value="C-terminal domain of RNA polymerase alpha subunit"/>
    <property type="match status" value="1"/>
</dbReference>
<dbReference type="SUPFAM" id="SSF56553">
    <property type="entry name" value="Insert subdomain of RNA polymerase alpha subunit"/>
    <property type="match status" value="1"/>
</dbReference>
<dbReference type="SUPFAM" id="SSF55257">
    <property type="entry name" value="RBP11-like subunits of RNA polymerase"/>
    <property type="match status" value="1"/>
</dbReference>
<name>RPOA_ZYGCR</name>
<organism>
    <name type="scientific">Zygnema circumcarinatum</name>
    <name type="common">Green alga</name>
    <dbReference type="NCBI Taxonomy" id="35869"/>
    <lineage>
        <taxon>Eukaryota</taxon>
        <taxon>Viridiplantae</taxon>
        <taxon>Streptophyta</taxon>
        <taxon>Zygnematophyceae</taxon>
        <taxon>Zygnematophycidae</taxon>
        <taxon>Zygnematales</taxon>
        <taxon>Zygnemataceae</taxon>
        <taxon>Zygnema</taxon>
    </lineage>
</organism>
<sequence>MNLHRISSEPKCKCLNHEIQNARLHYGRFAVYPLFPGQAITIGTAIRRALLGEVHSTCITSAYVVGASHEYSTLKGIRESIHDILLNLKDIVFKSDTLERQEGILLFNGPGIVTAQHIKLPPVVQVVDNTQYIARLEMPTSIEIHITLENTKTCTSLNTMPTTKGRFILDAALKPVRNMNYSIHSLGEGDMRQEMLVLEVWTNGSLTPQEVISQASQNLNDLLKPLLKVERYFQAKQNIHKKRMFTPTQSENLNMDQIEMIGGNKLIDQPLLPADSHLNSSLSLNIDNLVHLEGISIDDLQISVRASNCLKKVGIYTIRQLLSYTQQDLFQIKNLGKKSVEQIVIAIRKSYGHILG</sequence>
<gene>
    <name evidence="1" type="primary">rpoA</name>
</gene>
<feature type="chain" id="PRO_0000296911" description="DNA-directed RNA polymerase subunit alpha">
    <location>
        <begin position="1"/>
        <end position="356"/>
    </location>
</feature>
<feature type="region of interest" description="Alpha N-terminal domain (alpha-NTD)" evidence="1">
    <location>
        <begin position="1"/>
        <end position="230"/>
    </location>
</feature>
<feature type="region of interest" description="Alpha C-terminal domain (alpha-CTD)" evidence="1">
    <location>
        <begin position="267"/>
        <end position="356"/>
    </location>
</feature>
<comment type="function">
    <text evidence="1">DNA-dependent RNA polymerase catalyzes the transcription of DNA into RNA using the four ribonucleoside triphosphates as substrates.</text>
</comment>
<comment type="catalytic activity">
    <reaction evidence="1">
        <text>RNA(n) + a ribonucleoside 5'-triphosphate = RNA(n+1) + diphosphate</text>
        <dbReference type="Rhea" id="RHEA:21248"/>
        <dbReference type="Rhea" id="RHEA-COMP:14527"/>
        <dbReference type="Rhea" id="RHEA-COMP:17342"/>
        <dbReference type="ChEBI" id="CHEBI:33019"/>
        <dbReference type="ChEBI" id="CHEBI:61557"/>
        <dbReference type="ChEBI" id="CHEBI:140395"/>
        <dbReference type="EC" id="2.7.7.6"/>
    </reaction>
</comment>
<comment type="subunit">
    <text evidence="1">In plastids the minimal PEP RNA polymerase catalytic core is composed of four subunits: alpha, beta, beta', and beta''. When a (nuclear-encoded) sigma factor is associated with the core the holoenzyme is formed, which can initiate transcription.</text>
</comment>
<comment type="subcellular location">
    <subcellularLocation>
        <location>Plastid</location>
        <location>Chloroplast</location>
    </subcellularLocation>
</comment>
<comment type="domain">
    <text evidence="1">The N-terminal domain is essential for RNAP assembly and basal transcription, whereas the C-terminal domain is involved in interaction with transcriptional regulators and with upstream promoter elements.</text>
</comment>
<comment type="similarity">
    <text evidence="1">Belongs to the RNA polymerase alpha chain family.</text>
</comment>
<reference key="1">
    <citation type="journal article" date="2005" name="BMC Biol.">
        <title>The complete chloroplast DNA sequences of the charophycean green algae Staurastrum and Zygnema reveal that the chloroplast genome underwent extensive changes during the evolution of the Zygnematales.</title>
        <authorList>
            <person name="Turmel M."/>
            <person name="Otis C."/>
            <person name="Lemieux C."/>
        </authorList>
    </citation>
    <scope>NUCLEOTIDE SEQUENCE [LARGE SCALE GENOMIC DNA]</scope>
</reference>